<gene>
    <name evidence="1" type="primary">psbM</name>
</gene>
<comment type="function">
    <text evidence="1">One of the components of the core complex of photosystem II (PSII). PSII is a light-driven water:plastoquinone oxidoreductase that uses light energy to abstract electrons from H(2)O, generating O(2) and a proton gradient subsequently used for ATP formation. It consists of a core antenna complex that captures photons, and an electron transfer chain that converts photonic excitation into a charge separation. This subunit is found at the monomer-monomer interface.</text>
</comment>
<comment type="subunit">
    <text evidence="1">PSII is composed of 1 copy each of membrane proteins PsbA, PsbB, PsbC, PsbD, PsbE, PsbF, PsbH, PsbI, PsbJ, PsbK, PsbL, PsbM, PsbT, PsbX, PsbY, PsbZ, Psb30/Ycf12, at least 3 peripheral proteins of the oxygen-evolving complex and a large number of cofactors. It forms dimeric complexes.</text>
</comment>
<comment type="subcellular location">
    <subcellularLocation>
        <location evidence="1">Plastid</location>
        <location evidence="1">Chloroplast thylakoid membrane</location>
        <topology evidence="1">Single-pass membrane protein</topology>
    </subcellularLocation>
</comment>
<comment type="similarity">
    <text evidence="1">Belongs to the PsbM family.</text>
</comment>
<name>PSBM_CALFG</name>
<keyword id="KW-0150">Chloroplast</keyword>
<keyword id="KW-0472">Membrane</keyword>
<keyword id="KW-0602">Photosynthesis</keyword>
<keyword id="KW-0604">Photosystem II</keyword>
<keyword id="KW-0934">Plastid</keyword>
<keyword id="KW-0674">Reaction center</keyword>
<keyword id="KW-0793">Thylakoid</keyword>
<keyword id="KW-0812">Transmembrane</keyword>
<keyword id="KW-1133">Transmembrane helix</keyword>
<protein>
    <recommendedName>
        <fullName evidence="1">Photosystem II reaction center protein M</fullName>
        <shortName evidence="1">PSII-M</shortName>
    </recommendedName>
</protein>
<proteinExistence type="inferred from homology"/>
<geneLocation type="chloroplast"/>
<sequence length="34" mass="3756">MEVNILAFIATALFILVPTAFLLIIYVKTVSQSD</sequence>
<reference key="1">
    <citation type="journal article" date="2003" name="Plant Syst. Evol.">
        <title>The chloroplast genome of the 'basal' angiosperm Calycanthus fertilis -- structural and phylogenetic analyses.</title>
        <authorList>
            <person name="Goremykin V."/>
            <person name="Hirsch-Ernst K.I."/>
            <person name="Woelfl S."/>
            <person name="Hellwig F.H."/>
        </authorList>
    </citation>
    <scope>NUCLEOTIDE SEQUENCE [LARGE SCALE GENOMIC DNA]</scope>
</reference>
<organism>
    <name type="scientific">Calycanthus floridus var. glaucus</name>
    <name type="common">Eastern sweetshrub</name>
    <name type="synonym">Calycanthus fertilis var. ferax</name>
    <dbReference type="NCBI Taxonomy" id="212734"/>
    <lineage>
        <taxon>Eukaryota</taxon>
        <taxon>Viridiplantae</taxon>
        <taxon>Streptophyta</taxon>
        <taxon>Embryophyta</taxon>
        <taxon>Tracheophyta</taxon>
        <taxon>Spermatophyta</taxon>
        <taxon>Magnoliopsida</taxon>
        <taxon>Magnoliidae</taxon>
        <taxon>Laurales</taxon>
        <taxon>Calycanthaceae</taxon>
        <taxon>Calycanthus</taxon>
    </lineage>
</organism>
<feature type="chain" id="PRO_0000217551" description="Photosystem II reaction center protein M">
    <location>
        <begin position="1"/>
        <end position="34"/>
    </location>
</feature>
<feature type="transmembrane region" description="Helical" evidence="1">
    <location>
        <begin position="5"/>
        <end position="25"/>
    </location>
</feature>
<dbReference type="EMBL" id="AJ428413">
    <property type="protein sequence ID" value="CAD28715.1"/>
    <property type="molecule type" value="Genomic_DNA"/>
</dbReference>
<dbReference type="RefSeq" id="NP_862748.1">
    <property type="nucleotide sequence ID" value="NC_004993.1"/>
</dbReference>
<dbReference type="SMR" id="Q7HKX9"/>
<dbReference type="GeneID" id="2598017"/>
<dbReference type="GO" id="GO:0009535">
    <property type="term" value="C:chloroplast thylakoid membrane"/>
    <property type="evidence" value="ECO:0007669"/>
    <property type="project" value="UniProtKB-SubCell"/>
</dbReference>
<dbReference type="GO" id="GO:0009523">
    <property type="term" value="C:photosystem II"/>
    <property type="evidence" value="ECO:0007669"/>
    <property type="project" value="UniProtKB-KW"/>
</dbReference>
<dbReference type="GO" id="GO:0019684">
    <property type="term" value="P:photosynthesis, light reaction"/>
    <property type="evidence" value="ECO:0007669"/>
    <property type="project" value="InterPro"/>
</dbReference>
<dbReference type="HAMAP" id="MF_00438">
    <property type="entry name" value="PSII_PsbM"/>
    <property type="match status" value="1"/>
</dbReference>
<dbReference type="InterPro" id="IPR007826">
    <property type="entry name" value="PSII_PsbM"/>
</dbReference>
<dbReference type="InterPro" id="IPR037269">
    <property type="entry name" value="PSII_PsbM_sf"/>
</dbReference>
<dbReference type="NCBIfam" id="TIGR03038">
    <property type="entry name" value="PS_II_psbM"/>
    <property type="match status" value="1"/>
</dbReference>
<dbReference type="PANTHER" id="PTHR35774">
    <property type="entry name" value="PHOTOSYSTEM II REACTION CENTER PROTEIN M"/>
    <property type="match status" value="1"/>
</dbReference>
<dbReference type="PANTHER" id="PTHR35774:SF1">
    <property type="entry name" value="PHOTOSYSTEM II REACTION CENTER PROTEIN M"/>
    <property type="match status" value="1"/>
</dbReference>
<dbReference type="Pfam" id="PF05151">
    <property type="entry name" value="PsbM"/>
    <property type="match status" value="1"/>
</dbReference>
<dbReference type="SUPFAM" id="SSF161033">
    <property type="entry name" value="Photosystem II reaction center protein M, PsbM"/>
    <property type="match status" value="1"/>
</dbReference>
<evidence type="ECO:0000255" key="1">
    <source>
        <dbReference type="HAMAP-Rule" id="MF_00438"/>
    </source>
</evidence>
<accession>Q7HKX9</accession>